<protein>
    <recommendedName>
        <fullName evidence="1">Thymidylate kinase</fullName>
        <ecNumber evidence="1">2.7.4.9</ecNumber>
    </recommendedName>
    <alternativeName>
        <fullName evidence="1">dTMP kinase</fullName>
    </alternativeName>
</protein>
<keyword id="KW-0067">ATP-binding</keyword>
<keyword id="KW-0418">Kinase</keyword>
<keyword id="KW-0545">Nucleotide biosynthesis</keyword>
<keyword id="KW-0547">Nucleotide-binding</keyword>
<keyword id="KW-1185">Reference proteome</keyword>
<keyword id="KW-0808">Transferase</keyword>
<evidence type="ECO:0000255" key="1">
    <source>
        <dbReference type="HAMAP-Rule" id="MF_00165"/>
    </source>
</evidence>
<name>KTHY_FINM2</name>
<proteinExistence type="inferred from homology"/>
<accession>B0S2F7</accession>
<comment type="function">
    <text evidence="1">Phosphorylation of dTMP to form dTDP in both de novo and salvage pathways of dTTP synthesis.</text>
</comment>
<comment type="catalytic activity">
    <reaction evidence="1">
        <text>dTMP + ATP = dTDP + ADP</text>
        <dbReference type="Rhea" id="RHEA:13517"/>
        <dbReference type="ChEBI" id="CHEBI:30616"/>
        <dbReference type="ChEBI" id="CHEBI:58369"/>
        <dbReference type="ChEBI" id="CHEBI:63528"/>
        <dbReference type="ChEBI" id="CHEBI:456216"/>
        <dbReference type="EC" id="2.7.4.9"/>
    </reaction>
</comment>
<comment type="similarity">
    <text evidence="1">Belongs to the thymidylate kinase family.</text>
</comment>
<feature type="chain" id="PRO_1000097395" description="Thymidylate kinase">
    <location>
        <begin position="1"/>
        <end position="203"/>
    </location>
</feature>
<feature type="binding site" evidence="1">
    <location>
        <begin position="7"/>
        <end position="14"/>
    </location>
    <ligand>
        <name>ATP</name>
        <dbReference type="ChEBI" id="CHEBI:30616"/>
    </ligand>
</feature>
<sequence length="203" mass="23056">MFITFEGPDGSGKSTIIQKVYDYLIENNYDVIKTREPGGSPIAEKIRNLILDTENIKMGYRTEALLYAASRAQHVEETILPALNENKIVLCDRFLISSLAYQGVGRGLGIENVRNINEFAINGVFPDFVLFFDVDPITTLKRKSSLDTADRLEKEGNNFHERVYNGYKEILNSEKNIEIIDATQSVEDVFSQCIEVLKRRNVL</sequence>
<dbReference type="EC" id="2.7.4.9" evidence="1"/>
<dbReference type="EMBL" id="AP008971">
    <property type="protein sequence ID" value="BAG08547.1"/>
    <property type="molecule type" value="Genomic_DNA"/>
</dbReference>
<dbReference type="RefSeq" id="WP_012290847.1">
    <property type="nucleotide sequence ID" value="NC_010376.1"/>
</dbReference>
<dbReference type="SMR" id="B0S2F7"/>
<dbReference type="STRING" id="334413.FMG_1129"/>
<dbReference type="KEGG" id="fma:FMG_1129"/>
<dbReference type="eggNOG" id="COG0125">
    <property type="taxonomic scope" value="Bacteria"/>
</dbReference>
<dbReference type="HOGENOM" id="CLU_049131_0_2_9"/>
<dbReference type="Proteomes" id="UP000001319">
    <property type="component" value="Chromosome"/>
</dbReference>
<dbReference type="GO" id="GO:0005829">
    <property type="term" value="C:cytosol"/>
    <property type="evidence" value="ECO:0007669"/>
    <property type="project" value="TreeGrafter"/>
</dbReference>
<dbReference type="GO" id="GO:0005524">
    <property type="term" value="F:ATP binding"/>
    <property type="evidence" value="ECO:0007669"/>
    <property type="project" value="UniProtKB-UniRule"/>
</dbReference>
<dbReference type="GO" id="GO:0004798">
    <property type="term" value="F:dTMP kinase activity"/>
    <property type="evidence" value="ECO:0007669"/>
    <property type="project" value="UniProtKB-UniRule"/>
</dbReference>
<dbReference type="GO" id="GO:0006233">
    <property type="term" value="P:dTDP biosynthetic process"/>
    <property type="evidence" value="ECO:0007669"/>
    <property type="project" value="InterPro"/>
</dbReference>
<dbReference type="GO" id="GO:0006235">
    <property type="term" value="P:dTTP biosynthetic process"/>
    <property type="evidence" value="ECO:0007669"/>
    <property type="project" value="UniProtKB-UniRule"/>
</dbReference>
<dbReference type="GO" id="GO:0006227">
    <property type="term" value="P:dUDP biosynthetic process"/>
    <property type="evidence" value="ECO:0007669"/>
    <property type="project" value="TreeGrafter"/>
</dbReference>
<dbReference type="CDD" id="cd01672">
    <property type="entry name" value="TMPK"/>
    <property type="match status" value="1"/>
</dbReference>
<dbReference type="FunFam" id="3.40.50.300:FF:000225">
    <property type="entry name" value="Thymidylate kinase"/>
    <property type="match status" value="1"/>
</dbReference>
<dbReference type="Gene3D" id="3.40.50.300">
    <property type="entry name" value="P-loop containing nucleotide triphosphate hydrolases"/>
    <property type="match status" value="1"/>
</dbReference>
<dbReference type="HAMAP" id="MF_00165">
    <property type="entry name" value="Thymidylate_kinase"/>
    <property type="match status" value="1"/>
</dbReference>
<dbReference type="InterPro" id="IPR027417">
    <property type="entry name" value="P-loop_NTPase"/>
</dbReference>
<dbReference type="InterPro" id="IPR039430">
    <property type="entry name" value="Thymidylate_kin-like_dom"/>
</dbReference>
<dbReference type="InterPro" id="IPR018095">
    <property type="entry name" value="Thymidylate_kin_CS"/>
</dbReference>
<dbReference type="InterPro" id="IPR018094">
    <property type="entry name" value="Thymidylate_kinase"/>
</dbReference>
<dbReference type="NCBIfam" id="TIGR00041">
    <property type="entry name" value="DTMP_kinase"/>
    <property type="match status" value="1"/>
</dbReference>
<dbReference type="PANTHER" id="PTHR10344">
    <property type="entry name" value="THYMIDYLATE KINASE"/>
    <property type="match status" value="1"/>
</dbReference>
<dbReference type="PANTHER" id="PTHR10344:SF4">
    <property type="entry name" value="UMP-CMP KINASE 2, MITOCHONDRIAL"/>
    <property type="match status" value="1"/>
</dbReference>
<dbReference type="Pfam" id="PF02223">
    <property type="entry name" value="Thymidylate_kin"/>
    <property type="match status" value="1"/>
</dbReference>
<dbReference type="SUPFAM" id="SSF52540">
    <property type="entry name" value="P-loop containing nucleoside triphosphate hydrolases"/>
    <property type="match status" value="1"/>
</dbReference>
<dbReference type="PROSITE" id="PS01331">
    <property type="entry name" value="THYMIDYLATE_KINASE"/>
    <property type="match status" value="1"/>
</dbReference>
<gene>
    <name evidence="1" type="primary">tmk</name>
    <name type="ordered locus">FMG_1129</name>
</gene>
<reference key="1">
    <citation type="journal article" date="2008" name="DNA Res.">
        <title>Complete genome sequence of Finegoldia magna, an anaerobic opportunistic pathogen.</title>
        <authorList>
            <person name="Goto T."/>
            <person name="Yamashita A."/>
            <person name="Hirakawa H."/>
            <person name="Matsutani M."/>
            <person name="Todo K."/>
            <person name="Ohshima K."/>
            <person name="Toh H."/>
            <person name="Miyamoto K."/>
            <person name="Kuhara S."/>
            <person name="Hattori M."/>
            <person name="Shimizu T."/>
            <person name="Akimoto S."/>
        </authorList>
    </citation>
    <scope>NUCLEOTIDE SEQUENCE [LARGE SCALE GENOMIC DNA]</scope>
    <source>
        <strain>ATCC 29328 / DSM 20472 / WAL 2508</strain>
    </source>
</reference>
<organism>
    <name type="scientific">Finegoldia magna (strain ATCC 29328 / DSM 20472 / WAL 2508)</name>
    <name type="common">Peptostreptococcus magnus</name>
    <dbReference type="NCBI Taxonomy" id="334413"/>
    <lineage>
        <taxon>Bacteria</taxon>
        <taxon>Bacillati</taxon>
        <taxon>Bacillota</taxon>
        <taxon>Tissierellia</taxon>
        <taxon>Tissierellales</taxon>
        <taxon>Peptoniphilaceae</taxon>
        <taxon>Finegoldia</taxon>
    </lineage>
</organism>